<sequence length="541" mass="60710">MAGVLAGDCSFGESGVSSYSRNSNEKQDEVARWYFGRKEIEENSPSRLDSIDLKKETYLRKSYCTFLQDLGMRLKVPQVTIATAIIFCHRFFIRQSHARNDRRTIATVCMFLAGKVEETPRPLKDVIVVSYEIIHKKDPTTAQKIKQKEVYEQQKELILNGEKIVLSTLGFDFNVYHPYKPLVEAIKKFKVAQNALAQVAWNFVNDGLRTSLCLQFKPHHIAAGAIFLAAKFLKVKLPSDGEKVWWQEFDVTPRQLEDVSNQMLELYEQNRVPASQVSEVESSVGGGSAHHVGSRPSARLTHEHSNSDNLGGSTKATQNRSNDNGSGEAGSVITEQKGERDTETKDSMHTESHPAHKSRSGVEAPGEDKIEKAGAHFPEDDKSRIVGTADVTVSQSPKDIKMFRDKVKAKLEAKKVQGEKTRKKDLVDEDDLIERELEDVELAVEDDKDIQNKSSMGTEHGEILDGNNLVVNTEEGEMIDDVSSTMPSRKRKMESPCEKQLGEGKRRHDNSENVEEGQKTNPGGSSHSYGDREPRRHSQER</sequence>
<organism>
    <name type="scientific">Arabidopsis thaliana</name>
    <name type="common">Mouse-ear cress</name>
    <dbReference type="NCBI Taxonomy" id="3702"/>
    <lineage>
        <taxon>Eukaryota</taxon>
        <taxon>Viridiplantae</taxon>
        <taxon>Streptophyta</taxon>
        <taxon>Embryophyta</taxon>
        <taxon>Tracheophyta</taxon>
        <taxon>Spermatophyta</taxon>
        <taxon>Magnoliopsida</taxon>
        <taxon>eudicotyledons</taxon>
        <taxon>Gunneridae</taxon>
        <taxon>Pentapetalae</taxon>
        <taxon>rosids</taxon>
        <taxon>malvids</taxon>
        <taxon>Brassicales</taxon>
        <taxon>Brassicaceae</taxon>
        <taxon>Camelineae</taxon>
        <taxon>Arabidopsis</taxon>
    </lineage>
</organism>
<gene>
    <name type="primary">CYCT1-4</name>
    <name type="ordered locus">At4g19600</name>
    <name type="ORF">F24J7.161</name>
</gene>
<protein>
    <recommendedName>
        <fullName>Cyclin-T1-4</fullName>
        <shortName>CycT1;4</shortName>
    </recommendedName>
    <alternativeName>
        <fullName>Protein AtCycT-like2</fullName>
    </alternativeName>
</protein>
<proteinExistence type="evidence at protein level"/>
<evidence type="ECO:0000256" key="1">
    <source>
        <dbReference type="SAM" id="MobiDB-lite"/>
    </source>
</evidence>
<evidence type="ECO:0000305" key="2"/>
<evidence type="ECO:0007744" key="3">
    <source>
    </source>
</evidence>
<name>CCT14_ARATH</name>
<comment type="similarity">
    <text evidence="2">Belongs to the cyclin family. Cyclin T subfamily.</text>
</comment>
<comment type="sequence caution" evidence="2">
    <conflict type="erroneous gene model prediction">
        <sequence resource="EMBL-CDS" id="CAB40377"/>
    </conflict>
</comment>
<comment type="sequence caution" evidence="2">
    <conflict type="erroneous gene model prediction">
        <sequence resource="EMBL-CDS" id="CAB78962"/>
    </conflict>
</comment>
<reference key="1">
    <citation type="journal article" date="1999" name="Nature">
        <title>Sequence and analysis of chromosome 4 of the plant Arabidopsis thaliana.</title>
        <authorList>
            <person name="Mayer K.F.X."/>
            <person name="Schueller C."/>
            <person name="Wambutt R."/>
            <person name="Murphy G."/>
            <person name="Volckaert G."/>
            <person name="Pohl T."/>
            <person name="Duesterhoeft A."/>
            <person name="Stiekema W."/>
            <person name="Entian K.-D."/>
            <person name="Terryn N."/>
            <person name="Harris B."/>
            <person name="Ansorge W."/>
            <person name="Brandt P."/>
            <person name="Grivell L.A."/>
            <person name="Rieger M."/>
            <person name="Weichselgartner M."/>
            <person name="de Simone V."/>
            <person name="Obermaier B."/>
            <person name="Mache R."/>
            <person name="Mueller M."/>
            <person name="Kreis M."/>
            <person name="Delseny M."/>
            <person name="Puigdomenech P."/>
            <person name="Watson M."/>
            <person name="Schmidtheini T."/>
            <person name="Reichert B."/>
            <person name="Portetelle D."/>
            <person name="Perez-Alonso M."/>
            <person name="Boutry M."/>
            <person name="Bancroft I."/>
            <person name="Vos P."/>
            <person name="Hoheisel J."/>
            <person name="Zimmermann W."/>
            <person name="Wedler H."/>
            <person name="Ridley P."/>
            <person name="Langham S.-A."/>
            <person name="McCullagh B."/>
            <person name="Bilham L."/>
            <person name="Robben J."/>
            <person name="van der Schueren J."/>
            <person name="Grymonprez B."/>
            <person name="Chuang Y.-J."/>
            <person name="Vandenbussche F."/>
            <person name="Braeken M."/>
            <person name="Weltjens I."/>
            <person name="Voet M."/>
            <person name="Bastiaens I."/>
            <person name="Aert R."/>
            <person name="Defoor E."/>
            <person name="Weitzenegger T."/>
            <person name="Bothe G."/>
            <person name="Ramsperger U."/>
            <person name="Hilbert H."/>
            <person name="Braun M."/>
            <person name="Holzer E."/>
            <person name="Brandt A."/>
            <person name="Peters S."/>
            <person name="van Staveren M."/>
            <person name="Dirkse W."/>
            <person name="Mooijman P."/>
            <person name="Klein Lankhorst R."/>
            <person name="Rose M."/>
            <person name="Hauf J."/>
            <person name="Koetter P."/>
            <person name="Berneiser S."/>
            <person name="Hempel S."/>
            <person name="Feldpausch M."/>
            <person name="Lamberth S."/>
            <person name="Van den Daele H."/>
            <person name="De Keyser A."/>
            <person name="Buysshaert C."/>
            <person name="Gielen J."/>
            <person name="Villarroel R."/>
            <person name="De Clercq R."/>
            <person name="van Montagu M."/>
            <person name="Rogers J."/>
            <person name="Cronin A."/>
            <person name="Quail M.A."/>
            <person name="Bray-Allen S."/>
            <person name="Clark L."/>
            <person name="Doggett J."/>
            <person name="Hall S."/>
            <person name="Kay M."/>
            <person name="Lennard N."/>
            <person name="McLay K."/>
            <person name="Mayes R."/>
            <person name="Pettett A."/>
            <person name="Rajandream M.A."/>
            <person name="Lyne M."/>
            <person name="Benes V."/>
            <person name="Rechmann S."/>
            <person name="Borkova D."/>
            <person name="Bloecker H."/>
            <person name="Scharfe M."/>
            <person name="Grimm M."/>
            <person name="Loehnert T.-H."/>
            <person name="Dose S."/>
            <person name="de Haan M."/>
            <person name="Maarse A.C."/>
            <person name="Schaefer M."/>
            <person name="Mueller-Auer S."/>
            <person name="Gabel C."/>
            <person name="Fuchs M."/>
            <person name="Fartmann B."/>
            <person name="Granderath K."/>
            <person name="Dauner D."/>
            <person name="Herzl A."/>
            <person name="Neumann S."/>
            <person name="Argiriou A."/>
            <person name="Vitale D."/>
            <person name="Liguori R."/>
            <person name="Piravandi E."/>
            <person name="Massenet O."/>
            <person name="Quigley F."/>
            <person name="Clabauld G."/>
            <person name="Muendlein A."/>
            <person name="Felber R."/>
            <person name="Schnabl S."/>
            <person name="Hiller R."/>
            <person name="Schmidt W."/>
            <person name="Lecharny A."/>
            <person name="Aubourg S."/>
            <person name="Chefdor F."/>
            <person name="Cooke R."/>
            <person name="Berger C."/>
            <person name="Monfort A."/>
            <person name="Casacuberta E."/>
            <person name="Gibbons T."/>
            <person name="Weber N."/>
            <person name="Vandenbol M."/>
            <person name="Bargues M."/>
            <person name="Terol J."/>
            <person name="Torres A."/>
            <person name="Perez-Perez A."/>
            <person name="Purnelle B."/>
            <person name="Bent E."/>
            <person name="Johnson S."/>
            <person name="Tacon D."/>
            <person name="Jesse T."/>
            <person name="Heijnen L."/>
            <person name="Schwarz S."/>
            <person name="Scholler P."/>
            <person name="Heber S."/>
            <person name="Francs P."/>
            <person name="Bielke C."/>
            <person name="Frishman D."/>
            <person name="Haase D."/>
            <person name="Lemcke K."/>
            <person name="Mewes H.-W."/>
            <person name="Stocker S."/>
            <person name="Zaccaria P."/>
            <person name="Bevan M."/>
            <person name="Wilson R.K."/>
            <person name="de la Bastide M."/>
            <person name="Habermann K."/>
            <person name="Parnell L."/>
            <person name="Dedhia N."/>
            <person name="Gnoj L."/>
            <person name="Schutz K."/>
            <person name="Huang E."/>
            <person name="Spiegel L."/>
            <person name="Sekhon M."/>
            <person name="Murray J."/>
            <person name="Sheet P."/>
            <person name="Cordes M."/>
            <person name="Abu-Threideh J."/>
            <person name="Stoneking T."/>
            <person name="Kalicki J."/>
            <person name="Graves T."/>
            <person name="Harmon G."/>
            <person name="Edwards J."/>
            <person name="Latreille P."/>
            <person name="Courtney L."/>
            <person name="Cloud J."/>
            <person name="Abbott A."/>
            <person name="Scott K."/>
            <person name="Johnson D."/>
            <person name="Minx P."/>
            <person name="Bentley D."/>
            <person name="Fulton B."/>
            <person name="Miller N."/>
            <person name="Greco T."/>
            <person name="Kemp K."/>
            <person name="Kramer J."/>
            <person name="Fulton L."/>
            <person name="Mardis E."/>
            <person name="Dante M."/>
            <person name="Pepin K."/>
            <person name="Hillier L.W."/>
            <person name="Nelson J."/>
            <person name="Spieth J."/>
            <person name="Ryan E."/>
            <person name="Andrews S."/>
            <person name="Geisel C."/>
            <person name="Layman D."/>
            <person name="Du H."/>
            <person name="Ali J."/>
            <person name="Berghoff A."/>
            <person name="Jones K."/>
            <person name="Drone K."/>
            <person name="Cotton M."/>
            <person name="Joshu C."/>
            <person name="Antonoiu B."/>
            <person name="Zidanic M."/>
            <person name="Strong C."/>
            <person name="Sun H."/>
            <person name="Lamar B."/>
            <person name="Yordan C."/>
            <person name="Ma P."/>
            <person name="Zhong J."/>
            <person name="Preston R."/>
            <person name="Vil D."/>
            <person name="Shekher M."/>
            <person name="Matero A."/>
            <person name="Shah R."/>
            <person name="Swaby I.K."/>
            <person name="O'Shaughnessy A."/>
            <person name="Rodriguez M."/>
            <person name="Hoffman J."/>
            <person name="Till S."/>
            <person name="Granat S."/>
            <person name="Shohdy N."/>
            <person name="Hasegawa A."/>
            <person name="Hameed A."/>
            <person name="Lodhi M."/>
            <person name="Johnson A."/>
            <person name="Chen E."/>
            <person name="Marra M.A."/>
            <person name="Martienssen R."/>
            <person name="McCombie W.R."/>
        </authorList>
    </citation>
    <scope>NUCLEOTIDE SEQUENCE [LARGE SCALE GENOMIC DNA]</scope>
    <source>
        <strain>cv. Columbia</strain>
    </source>
</reference>
<reference key="2">
    <citation type="journal article" date="2017" name="Plant J.">
        <title>Araport11: a complete reannotation of the Arabidopsis thaliana reference genome.</title>
        <authorList>
            <person name="Cheng C.Y."/>
            <person name="Krishnakumar V."/>
            <person name="Chan A.P."/>
            <person name="Thibaud-Nissen F."/>
            <person name="Schobel S."/>
            <person name="Town C.D."/>
        </authorList>
    </citation>
    <scope>GENOME REANNOTATION</scope>
    <source>
        <strain>cv. Columbia</strain>
    </source>
</reference>
<reference key="3">
    <citation type="journal article" date="2002" name="Science">
        <title>Functional annotation of a full-length Arabidopsis cDNA collection.</title>
        <authorList>
            <person name="Seki M."/>
            <person name="Narusaka M."/>
            <person name="Kamiya A."/>
            <person name="Ishida J."/>
            <person name="Satou M."/>
            <person name="Sakurai T."/>
            <person name="Nakajima M."/>
            <person name="Enju A."/>
            <person name="Akiyama K."/>
            <person name="Oono Y."/>
            <person name="Muramatsu M."/>
            <person name="Hayashizaki Y."/>
            <person name="Kawai J."/>
            <person name="Carninci P."/>
            <person name="Itoh M."/>
            <person name="Ishii Y."/>
            <person name="Arakawa T."/>
            <person name="Shibata K."/>
            <person name="Shinagawa A."/>
            <person name="Shinozaki K."/>
        </authorList>
    </citation>
    <scope>NUCLEOTIDE SEQUENCE [LARGE SCALE MRNA]</scope>
    <source>
        <strain>cv. Columbia</strain>
    </source>
</reference>
<reference key="4">
    <citation type="submission" date="2006-11" db="EMBL/GenBank/DDBJ databases">
        <title>Arabidopsis ORF clones.</title>
        <authorList>
            <person name="Bautista V.R."/>
            <person name="Kim C.J."/>
            <person name="Chen H."/>
            <person name="Quinitio C."/>
            <person name="Ecker J.R."/>
        </authorList>
    </citation>
    <scope>NUCLEOTIDE SEQUENCE [LARGE SCALE MRNA]</scope>
    <source>
        <strain>cv. Columbia</strain>
    </source>
</reference>
<reference key="5">
    <citation type="journal article" date="2004" name="Plant Physiol.">
        <title>Genome-wide analysis of the cyclin family in Arabidopsis and comparative phylogenetic analysis of plant cyclin-like proteins.</title>
        <authorList>
            <person name="Wang G."/>
            <person name="Kong H."/>
            <person name="Sun Y."/>
            <person name="Zhang X."/>
            <person name="Zhang W."/>
            <person name="Altman N."/>
            <person name="dePamphilis C.W."/>
            <person name="Ma H."/>
        </authorList>
    </citation>
    <scope>GENE FAMILY</scope>
    <scope>NOMENCLATURE</scope>
</reference>
<reference key="6">
    <citation type="journal article" date="2009" name="Plant Physiol.">
        <title>Large-scale Arabidopsis phosphoproteome profiling reveals novel chloroplast kinase substrates and phosphorylation networks.</title>
        <authorList>
            <person name="Reiland S."/>
            <person name="Messerli G."/>
            <person name="Baerenfaller K."/>
            <person name="Gerrits B."/>
            <person name="Endler A."/>
            <person name="Grossmann J."/>
            <person name="Gruissem W."/>
            <person name="Baginsky S."/>
        </authorList>
    </citation>
    <scope>PHOSPHORYLATION [LARGE SCALE ANALYSIS] AT SER-396</scope>
    <scope>IDENTIFICATION BY MASS SPECTROMETRY [LARGE SCALE ANALYSIS]</scope>
</reference>
<feature type="chain" id="PRO_0000287056" description="Cyclin-T1-4">
    <location>
        <begin position="1"/>
        <end position="541"/>
    </location>
</feature>
<feature type="region of interest" description="Disordered" evidence="1">
    <location>
        <begin position="277"/>
        <end position="366"/>
    </location>
</feature>
<feature type="region of interest" description="Disordered" evidence="1">
    <location>
        <begin position="445"/>
        <end position="541"/>
    </location>
</feature>
<feature type="compositionally biased region" description="Polar residues" evidence="1">
    <location>
        <begin position="307"/>
        <end position="325"/>
    </location>
</feature>
<feature type="compositionally biased region" description="Basic and acidic residues" evidence="1">
    <location>
        <begin position="336"/>
        <end position="354"/>
    </location>
</feature>
<feature type="compositionally biased region" description="Basic and acidic residues" evidence="1">
    <location>
        <begin position="493"/>
        <end position="511"/>
    </location>
</feature>
<feature type="compositionally biased region" description="Polar residues" evidence="1">
    <location>
        <begin position="519"/>
        <end position="528"/>
    </location>
</feature>
<feature type="compositionally biased region" description="Basic and acidic residues" evidence="1">
    <location>
        <begin position="529"/>
        <end position="541"/>
    </location>
</feature>
<feature type="modified residue" description="Phosphoserine" evidence="3">
    <location>
        <position position="396"/>
    </location>
</feature>
<accession>Q8GYM6</accession>
<accession>Q9SN70</accession>
<dbReference type="EMBL" id="AL021768">
    <property type="protein sequence ID" value="CAB40377.1"/>
    <property type="status" value="ALT_SEQ"/>
    <property type="molecule type" value="Genomic_DNA"/>
</dbReference>
<dbReference type="EMBL" id="AL161551">
    <property type="protein sequence ID" value="CAB78962.1"/>
    <property type="status" value="ALT_SEQ"/>
    <property type="molecule type" value="Genomic_DNA"/>
</dbReference>
<dbReference type="EMBL" id="CP002687">
    <property type="protein sequence ID" value="AEE84203.1"/>
    <property type="molecule type" value="Genomic_DNA"/>
</dbReference>
<dbReference type="EMBL" id="AK117509">
    <property type="protein sequence ID" value="BAC42172.1"/>
    <property type="molecule type" value="mRNA"/>
</dbReference>
<dbReference type="EMBL" id="BT029301">
    <property type="protein sequence ID" value="ABK32115.1"/>
    <property type="molecule type" value="mRNA"/>
</dbReference>
<dbReference type="PIR" id="T06153">
    <property type="entry name" value="T06153"/>
</dbReference>
<dbReference type="RefSeq" id="NP_193695.2">
    <property type="nucleotide sequence ID" value="NM_118080.3"/>
</dbReference>
<dbReference type="SMR" id="Q8GYM6"/>
<dbReference type="BioGRID" id="12995">
    <property type="interactions" value="3"/>
</dbReference>
<dbReference type="FunCoup" id="Q8GYM6">
    <property type="interactions" value="3077"/>
</dbReference>
<dbReference type="STRING" id="3702.Q8GYM6"/>
<dbReference type="iPTMnet" id="Q8GYM6"/>
<dbReference type="PaxDb" id="3702-AT4G19600.1"/>
<dbReference type="ProteomicsDB" id="224385"/>
<dbReference type="EnsemblPlants" id="AT4G19600.1">
    <property type="protein sequence ID" value="AT4G19600.1"/>
    <property type="gene ID" value="AT4G19600"/>
</dbReference>
<dbReference type="GeneID" id="827702"/>
<dbReference type="Gramene" id="AT4G19600.1">
    <property type="protein sequence ID" value="AT4G19600.1"/>
    <property type="gene ID" value="AT4G19600"/>
</dbReference>
<dbReference type="KEGG" id="ath:AT4G19600"/>
<dbReference type="Araport" id="AT4G19600"/>
<dbReference type="TAIR" id="AT4G19600">
    <property type="gene designation" value="CYCT1"/>
</dbReference>
<dbReference type="eggNOG" id="KOG0834">
    <property type="taxonomic scope" value="Eukaryota"/>
</dbReference>
<dbReference type="HOGENOM" id="CLU_022000_8_1_1"/>
<dbReference type="InParanoid" id="Q8GYM6"/>
<dbReference type="OMA" id="HGKNHEE"/>
<dbReference type="PhylomeDB" id="Q8GYM6"/>
<dbReference type="PRO" id="PR:Q8GYM6"/>
<dbReference type="Proteomes" id="UP000006548">
    <property type="component" value="Chromosome 4"/>
</dbReference>
<dbReference type="ExpressionAtlas" id="Q8GYM6">
    <property type="expression patterns" value="baseline and differential"/>
</dbReference>
<dbReference type="GO" id="GO:0016538">
    <property type="term" value="F:cyclin-dependent protein serine/threonine kinase regulator activity"/>
    <property type="evidence" value="ECO:0007669"/>
    <property type="project" value="InterPro"/>
</dbReference>
<dbReference type="GO" id="GO:0051301">
    <property type="term" value="P:cell division"/>
    <property type="evidence" value="ECO:0007669"/>
    <property type="project" value="UniProtKB-KW"/>
</dbReference>
<dbReference type="GO" id="GO:0006357">
    <property type="term" value="P:regulation of transcription by RNA polymerase II"/>
    <property type="evidence" value="ECO:0007669"/>
    <property type="project" value="InterPro"/>
</dbReference>
<dbReference type="GO" id="GO:0009615">
    <property type="term" value="P:response to virus"/>
    <property type="evidence" value="ECO:0000270"/>
    <property type="project" value="TAIR"/>
</dbReference>
<dbReference type="GO" id="GO:0010090">
    <property type="term" value="P:trichome morphogenesis"/>
    <property type="evidence" value="ECO:0000315"/>
    <property type="project" value="TAIR"/>
</dbReference>
<dbReference type="CDD" id="cd20587">
    <property type="entry name" value="CYCLIN_AcCycT_rpt1"/>
    <property type="match status" value="1"/>
</dbReference>
<dbReference type="CDD" id="cd20588">
    <property type="entry name" value="CYCLIN_AcCycT_rpt2"/>
    <property type="match status" value="1"/>
</dbReference>
<dbReference type="FunFam" id="1.10.472.10:FF:000026">
    <property type="entry name" value="Cyclin-T1-5 like"/>
    <property type="match status" value="1"/>
</dbReference>
<dbReference type="FunFam" id="1.10.472.10:FF:000028">
    <property type="entry name" value="Cyclin-T1-5 like"/>
    <property type="match status" value="1"/>
</dbReference>
<dbReference type="Gene3D" id="1.10.472.10">
    <property type="entry name" value="Cyclin-like"/>
    <property type="match status" value="2"/>
</dbReference>
<dbReference type="InterPro" id="IPR013763">
    <property type="entry name" value="Cyclin-like_dom"/>
</dbReference>
<dbReference type="InterPro" id="IPR036915">
    <property type="entry name" value="Cyclin-like_sf"/>
</dbReference>
<dbReference type="InterPro" id="IPR043198">
    <property type="entry name" value="Cyclin/Ssn8"/>
</dbReference>
<dbReference type="InterPro" id="IPR006671">
    <property type="entry name" value="Cyclin_N"/>
</dbReference>
<dbReference type="PANTHER" id="PTHR10026">
    <property type="entry name" value="CYCLIN"/>
    <property type="match status" value="1"/>
</dbReference>
<dbReference type="Pfam" id="PF00134">
    <property type="entry name" value="Cyclin_N"/>
    <property type="match status" value="1"/>
</dbReference>
<dbReference type="Pfam" id="PF21797">
    <property type="entry name" value="CycT2-like_C"/>
    <property type="match status" value="1"/>
</dbReference>
<dbReference type="SMART" id="SM00385">
    <property type="entry name" value="CYCLIN"/>
    <property type="match status" value="2"/>
</dbReference>
<dbReference type="SUPFAM" id="SSF47954">
    <property type="entry name" value="Cyclin-like"/>
    <property type="match status" value="2"/>
</dbReference>
<keyword id="KW-0131">Cell cycle</keyword>
<keyword id="KW-0132">Cell division</keyword>
<keyword id="KW-0195">Cyclin</keyword>
<keyword id="KW-0597">Phosphoprotein</keyword>
<keyword id="KW-1185">Reference proteome</keyword>